<evidence type="ECO:0000250" key="1"/>
<evidence type="ECO:0000269" key="2">
    <source>
    </source>
</evidence>
<evidence type="ECO:0000305" key="3"/>
<proteinExistence type="evidence at protein level"/>
<accession>P80566</accession>
<accession>Q92059</accession>
<organism>
    <name type="scientific">Gallus gallus</name>
    <name type="common">Chicken</name>
    <dbReference type="NCBI Taxonomy" id="9031"/>
    <lineage>
        <taxon>Eukaryota</taxon>
        <taxon>Metazoa</taxon>
        <taxon>Chordata</taxon>
        <taxon>Craniata</taxon>
        <taxon>Vertebrata</taxon>
        <taxon>Euteleostomi</taxon>
        <taxon>Archelosauria</taxon>
        <taxon>Archosauria</taxon>
        <taxon>Dinosauria</taxon>
        <taxon>Saurischia</taxon>
        <taxon>Theropoda</taxon>
        <taxon>Coelurosauria</taxon>
        <taxon>Aves</taxon>
        <taxon>Neognathae</taxon>
        <taxon>Galloanserae</taxon>
        <taxon>Galliformes</taxon>
        <taxon>Phasianidae</taxon>
        <taxon>Phasianinae</taxon>
        <taxon>Gallus</taxon>
    </lineage>
</organism>
<feature type="initiator methionine" description="Removed" evidence="2">
    <location>
        <position position="1"/>
    </location>
</feature>
<feature type="chain" id="PRO_0000164069" description="Superoxide dismutase [Cu-Zn]">
    <location>
        <begin position="2"/>
        <end position="154"/>
    </location>
</feature>
<feature type="binding site" evidence="1">
    <location>
        <position position="47"/>
    </location>
    <ligand>
        <name>Cu cation</name>
        <dbReference type="ChEBI" id="CHEBI:23378"/>
        <note>catalytic</note>
    </ligand>
</feature>
<feature type="binding site" evidence="1">
    <location>
        <position position="49"/>
    </location>
    <ligand>
        <name>Cu cation</name>
        <dbReference type="ChEBI" id="CHEBI:23378"/>
        <note>catalytic</note>
    </ligand>
</feature>
<feature type="binding site" evidence="1">
    <location>
        <position position="64"/>
    </location>
    <ligand>
        <name>Cu cation</name>
        <dbReference type="ChEBI" id="CHEBI:23378"/>
        <note>catalytic</note>
    </ligand>
</feature>
<feature type="binding site" evidence="1">
    <location>
        <position position="64"/>
    </location>
    <ligand>
        <name>Zn(2+)</name>
        <dbReference type="ChEBI" id="CHEBI:29105"/>
        <note>structural</note>
    </ligand>
</feature>
<feature type="binding site" evidence="1">
    <location>
        <position position="72"/>
    </location>
    <ligand>
        <name>Zn(2+)</name>
        <dbReference type="ChEBI" id="CHEBI:29105"/>
        <note>structural</note>
    </ligand>
</feature>
<feature type="binding site" evidence="1">
    <location>
        <position position="81"/>
    </location>
    <ligand>
        <name>Zn(2+)</name>
        <dbReference type="ChEBI" id="CHEBI:29105"/>
        <note>structural</note>
    </ligand>
</feature>
<feature type="binding site" evidence="1">
    <location>
        <position position="84"/>
    </location>
    <ligand>
        <name>Zn(2+)</name>
        <dbReference type="ChEBI" id="CHEBI:29105"/>
        <note>structural</note>
    </ligand>
</feature>
<feature type="binding site" evidence="1">
    <location>
        <position position="120"/>
    </location>
    <ligand>
        <name>Cu cation</name>
        <dbReference type="ChEBI" id="CHEBI:23378"/>
        <note>catalytic</note>
    </ligand>
</feature>
<feature type="modified residue" description="N-acetylalanine" evidence="2">
    <location>
        <position position="2"/>
    </location>
</feature>
<feature type="modified residue" description="S-glutathionyl cysteine" evidence="2">
    <location>
        <position position="154"/>
    </location>
</feature>
<feature type="lipid moiety-binding region" description="S-palmitoyl cysteine" evidence="1">
    <location>
        <position position="8"/>
    </location>
</feature>
<feature type="disulfide bond" evidence="1">
    <location>
        <begin position="58"/>
        <end position="146"/>
    </location>
</feature>
<feature type="sequence conflict" description="In Ref. 2; AA sequence." evidence="3" ref="2">
    <original>A</original>
    <variation>G</variation>
    <location>
        <position position="14"/>
    </location>
</feature>
<protein>
    <recommendedName>
        <fullName>Superoxide dismutase [Cu-Zn]</fullName>
        <ecNumber>1.15.1.1</ecNumber>
    </recommendedName>
</protein>
<gene>
    <name type="primary">SOD1</name>
</gene>
<reference key="1">
    <citation type="journal article" date="1996" name="DNA Seq.">
        <title>Characterisation of the chicken Cu,Zn superoxide dismutase gene.</title>
        <authorList>
            <person name="Stanton J.L."/>
            <person name="Wilton S.D."/>
            <person name="Laing N.G."/>
        </authorList>
    </citation>
    <scope>NUCLEOTIDE SEQUENCE [MRNA]</scope>
    <source>
        <tissue>Spinal cord</tissue>
    </source>
</reference>
<reference key="2">
    <citation type="journal article" date="1996" name="Eur. J. Biochem.">
        <title>Amino acid sequence of chicken Cu,Zn-containing superoxide dismutase and identification of glutathionyl adducts at exposed cysteine residues.</title>
        <authorList>
            <person name="Schinina M.E."/>
            <person name="Carlini P."/>
            <person name="Polticelli F."/>
            <person name="Zappacosta F."/>
            <person name="Bossa F."/>
            <person name="Calabrese L."/>
        </authorList>
    </citation>
    <scope>PROTEIN SEQUENCE OF 2-154</scope>
    <scope>CLEAVAGE OF INITIATOR METHIONINE</scope>
    <scope>ACETYLATION AT ALA-2</scope>
    <scope>GLUTATHIONYLATION AT CYS-154</scope>
    <scope>MASS SPECTROMETRY</scope>
    <source>
        <tissue>Erythrocyte</tissue>
    </source>
</reference>
<keyword id="KW-0007">Acetylation</keyword>
<keyword id="KW-0049">Antioxidant</keyword>
<keyword id="KW-0186">Copper</keyword>
<keyword id="KW-0963">Cytoplasm</keyword>
<keyword id="KW-0903">Direct protein sequencing</keyword>
<keyword id="KW-1015">Disulfide bond</keyword>
<keyword id="KW-0318">Glutathionylation</keyword>
<keyword id="KW-0449">Lipoprotein</keyword>
<keyword id="KW-0479">Metal-binding</keyword>
<keyword id="KW-0539">Nucleus</keyword>
<keyword id="KW-0560">Oxidoreductase</keyword>
<keyword id="KW-0564">Palmitate</keyword>
<keyword id="KW-1185">Reference proteome</keyword>
<keyword id="KW-0862">Zinc</keyword>
<sequence>MATLKAVCVMKGDAPVEGVIHFQQQGSGPVKVTGKITGLSDGDHGFHVHEFGDNTNGCTSAGAHFNPEGKQHGGPKDADRHVGDLGNVTAKGGVAEVEIEDSVISLTGPHCIIGRTMVVHAKSDDLGRGGDNESKLTGNAGPRLACGVIGIAKC</sequence>
<name>SODC_CHICK</name>
<comment type="function">
    <text>Destroys radicals which are normally produced within the cells and which are toxic to biological systems.</text>
</comment>
<comment type="catalytic activity">
    <reaction>
        <text>2 superoxide + 2 H(+) = H2O2 + O2</text>
        <dbReference type="Rhea" id="RHEA:20696"/>
        <dbReference type="ChEBI" id="CHEBI:15378"/>
        <dbReference type="ChEBI" id="CHEBI:15379"/>
        <dbReference type="ChEBI" id="CHEBI:16240"/>
        <dbReference type="ChEBI" id="CHEBI:18421"/>
        <dbReference type="EC" id="1.15.1.1"/>
    </reaction>
</comment>
<comment type="cofactor">
    <cofactor evidence="1">
        <name>Cu cation</name>
        <dbReference type="ChEBI" id="CHEBI:23378"/>
    </cofactor>
    <text evidence="1">Binds 1 copper ion per subunit.</text>
</comment>
<comment type="cofactor">
    <cofactor evidence="1">
        <name>Zn(2+)</name>
        <dbReference type="ChEBI" id="CHEBI:29105"/>
    </cofactor>
    <text evidence="1">Binds 1 zinc ion per subunit.</text>
</comment>
<comment type="subunit">
    <text>Homodimer.</text>
</comment>
<comment type="interaction">
    <interactant intactId="EBI-1637015">
        <id>P80566</id>
    </interactant>
    <interactant intactId="EBI-1635766">
        <id>Q8AYS8</id>
        <label>KCNMA1</label>
    </interactant>
    <organismsDiffer>false</organismsDiffer>
    <experiments>3</experiments>
</comment>
<comment type="subcellular location">
    <subcellularLocation>
        <location>Cytoplasm</location>
    </subcellularLocation>
    <subcellularLocation>
        <location evidence="1">Nucleus</location>
    </subcellularLocation>
</comment>
<comment type="mass spectrometry"/>
<comment type="similarity">
    <text evidence="3">Belongs to the Cu-Zn superoxide dismutase family.</text>
</comment>
<dbReference type="EC" id="1.15.1.1"/>
<dbReference type="EMBL" id="U28407">
    <property type="protein sequence ID" value="AAB88059.1"/>
    <property type="molecule type" value="mRNA"/>
</dbReference>
<dbReference type="PIR" id="S65436">
    <property type="entry name" value="S65436"/>
</dbReference>
<dbReference type="RefSeq" id="NP_990395.1">
    <property type="nucleotide sequence ID" value="NM_205064.1"/>
</dbReference>
<dbReference type="SMR" id="P80566"/>
<dbReference type="BioGRID" id="676211">
    <property type="interactions" value="1"/>
</dbReference>
<dbReference type="FunCoup" id="P80566">
    <property type="interactions" value="2071"/>
</dbReference>
<dbReference type="IntAct" id="P80566">
    <property type="interactions" value="1"/>
</dbReference>
<dbReference type="STRING" id="9031.ENSGALP00000035996"/>
<dbReference type="iPTMnet" id="P80566"/>
<dbReference type="PaxDb" id="9031-ENSGALP00000035996"/>
<dbReference type="GeneID" id="395938"/>
<dbReference type="KEGG" id="gga:395938"/>
<dbReference type="CTD" id="6647"/>
<dbReference type="VEuPathDB" id="HostDB:geneid_395938"/>
<dbReference type="eggNOG" id="KOG0441">
    <property type="taxonomic scope" value="Eukaryota"/>
</dbReference>
<dbReference type="InParanoid" id="P80566"/>
<dbReference type="OrthoDB" id="2015551at2759"/>
<dbReference type="PhylomeDB" id="P80566"/>
<dbReference type="PRO" id="PR:P80566"/>
<dbReference type="Proteomes" id="UP000000539">
    <property type="component" value="Unassembled WGS sequence"/>
</dbReference>
<dbReference type="GO" id="GO:0005829">
    <property type="term" value="C:cytosol"/>
    <property type="evidence" value="ECO:0000318"/>
    <property type="project" value="GO_Central"/>
</dbReference>
<dbReference type="GO" id="GO:0005739">
    <property type="term" value="C:mitochondrion"/>
    <property type="evidence" value="ECO:0000318"/>
    <property type="project" value="GO_Central"/>
</dbReference>
<dbReference type="GO" id="GO:0005634">
    <property type="term" value="C:nucleus"/>
    <property type="evidence" value="ECO:0000318"/>
    <property type="project" value="GO_Central"/>
</dbReference>
<dbReference type="GO" id="GO:0005777">
    <property type="term" value="C:peroxisome"/>
    <property type="evidence" value="ECO:0000318"/>
    <property type="project" value="GO_Central"/>
</dbReference>
<dbReference type="GO" id="GO:0005507">
    <property type="term" value="F:copper ion binding"/>
    <property type="evidence" value="ECO:0000318"/>
    <property type="project" value="GO_Central"/>
</dbReference>
<dbReference type="GO" id="GO:0004784">
    <property type="term" value="F:superoxide dismutase activity"/>
    <property type="evidence" value="ECO:0000318"/>
    <property type="project" value="GO_Central"/>
</dbReference>
<dbReference type="GO" id="GO:0019430">
    <property type="term" value="P:removal of superoxide radicals"/>
    <property type="evidence" value="ECO:0000318"/>
    <property type="project" value="GO_Central"/>
</dbReference>
<dbReference type="CDD" id="cd00305">
    <property type="entry name" value="Cu-Zn_Superoxide_Dismutase"/>
    <property type="match status" value="1"/>
</dbReference>
<dbReference type="FunFam" id="2.60.40.200:FF:000001">
    <property type="entry name" value="Superoxide dismutase [Cu-Zn]"/>
    <property type="match status" value="1"/>
</dbReference>
<dbReference type="Gene3D" id="2.60.40.200">
    <property type="entry name" value="Superoxide dismutase, copper/zinc binding domain"/>
    <property type="match status" value="1"/>
</dbReference>
<dbReference type="InterPro" id="IPR036423">
    <property type="entry name" value="SOD-like_Cu/Zn_dom_sf"/>
</dbReference>
<dbReference type="InterPro" id="IPR024134">
    <property type="entry name" value="SOD_Cu/Zn_/chaperone"/>
</dbReference>
<dbReference type="InterPro" id="IPR018152">
    <property type="entry name" value="SOD_Cu/Zn_BS"/>
</dbReference>
<dbReference type="InterPro" id="IPR001424">
    <property type="entry name" value="SOD_Cu_Zn_dom"/>
</dbReference>
<dbReference type="PANTHER" id="PTHR10003">
    <property type="entry name" value="SUPEROXIDE DISMUTASE CU-ZN -RELATED"/>
    <property type="match status" value="1"/>
</dbReference>
<dbReference type="Pfam" id="PF00080">
    <property type="entry name" value="Sod_Cu"/>
    <property type="match status" value="1"/>
</dbReference>
<dbReference type="PRINTS" id="PR00068">
    <property type="entry name" value="CUZNDISMTASE"/>
</dbReference>
<dbReference type="SUPFAM" id="SSF49329">
    <property type="entry name" value="Cu,Zn superoxide dismutase-like"/>
    <property type="match status" value="1"/>
</dbReference>
<dbReference type="PROSITE" id="PS00087">
    <property type="entry name" value="SOD_CU_ZN_1"/>
    <property type="match status" value="1"/>
</dbReference>
<dbReference type="PROSITE" id="PS00332">
    <property type="entry name" value="SOD_CU_ZN_2"/>
    <property type="match status" value="1"/>
</dbReference>